<protein>
    <recommendedName>
        <fullName>Guanine nucleotide-binding protein-like 3</fullName>
    </recommendedName>
    <alternativeName>
        <fullName>Nucleolar GTP-binding protein 3</fullName>
    </alternativeName>
    <alternativeName>
        <fullName>Nucleostemin</fullName>
    </alternativeName>
</protein>
<proteinExistence type="evidence at protein level"/>
<feature type="chain" id="PRO_0000122446" description="Guanine nucleotide-binding protein-like 3">
    <location>
        <begin position="1"/>
        <end position="538"/>
    </location>
</feature>
<feature type="domain" description="CP-type G" evidence="5">
    <location>
        <begin position="129"/>
        <end position="307"/>
    </location>
</feature>
<feature type="region of interest" description="Disordered" evidence="6">
    <location>
        <begin position="1"/>
        <end position="125"/>
    </location>
</feature>
<feature type="region of interest" description="Basic">
    <location>
        <begin position="2"/>
        <end position="46"/>
    </location>
</feature>
<feature type="region of interest" description="Intermediate">
    <location>
        <begin position="277"/>
        <end position="451"/>
    </location>
</feature>
<feature type="region of interest" description="Disordered" evidence="6">
    <location>
        <begin position="460"/>
        <end position="538"/>
    </location>
</feature>
<feature type="region of interest" description="Acidic">
    <location>
        <begin position="460"/>
        <end position="532"/>
    </location>
</feature>
<feature type="coiled-coil region" evidence="4">
    <location>
        <begin position="54"/>
        <end position="95"/>
    </location>
</feature>
<feature type="compositionally biased region" description="Basic residues" evidence="6">
    <location>
        <begin position="1"/>
        <end position="45"/>
    </location>
</feature>
<feature type="compositionally biased region" description="Basic and acidic residues" evidence="6">
    <location>
        <begin position="59"/>
        <end position="94"/>
    </location>
</feature>
<feature type="compositionally biased region" description="Acidic residues" evidence="6">
    <location>
        <begin position="95"/>
        <end position="110"/>
    </location>
</feature>
<feature type="compositionally biased region" description="Basic residues" evidence="6">
    <location>
        <begin position="115"/>
        <end position="125"/>
    </location>
</feature>
<feature type="compositionally biased region" description="Basic and acidic residues" evidence="6">
    <location>
        <begin position="460"/>
        <end position="473"/>
    </location>
</feature>
<feature type="compositionally biased region" description="Basic and acidic residues" evidence="6">
    <location>
        <begin position="481"/>
        <end position="491"/>
    </location>
</feature>
<feature type="compositionally biased region" description="Basic and acidic residues" evidence="6">
    <location>
        <begin position="514"/>
        <end position="524"/>
    </location>
</feature>
<feature type="binding site" evidence="4">
    <location>
        <begin position="176"/>
        <end position="179"/>
    </location>
    <ligand>
        <name>GTP</name>
        <dbReference type="ChEBI" id="CHEBI:37565"/>
    </ligand>
</feature>
<feature type="binding site" evidence="9">
    <location>
        <begin position="256"/>
        <end position="263"/>
    </location>
    <ligand>
        <name>GTP</name>
        <dbReference type="ChEBI" id="CHEBI:37565"/>
    </ligand>
</feature>
<feature type="binding site" evidence="4">
    <location>
        <begin position="300"/>
        <end position="303"/>
    </location>
    <ligand>
        <name>GTP</name>
        <dbReference type="ChEBI" id="CHEBI:37565"/>
    </ligand>
</feature>
<feature type="modified residue" description="N6-acetyllysine" evidence="3">
    <location>
        <position position="79"/>
    </location>
</feature>
<feature type="modified residue" description="Phosphoserine" evidence="2">
    <location>
        <position position="95"/>
    </location>
</feature>
<feature type="modified residue" description="Phosphoserine" evidence="10">
    <location>
        <position position="101"/>
    </location>
</feature>
<feature type="modified residue" description="Phosphoserine" evidence="2">
    <location>
        <position position="493"/>
    </location>
</feature>
<feature type="modified residue" description="Phosphoserine" evidence="10">
    <location>
        <position position="505"/>
    </location>
</feature>
<feature type="modified residue" description="Phosphoserine" evidence="3">
    <location>
        <position position="518"/>
    </location>
</feature>
<feature type="cross-link" description="Glycyl lysine isopeptide (Lys-Gly) (interchain with G-Cter in SUMO2)" evidence="3">
    <location>
        <position position="91"/>
    </location>
</feature>
<feature type="cross-link" description="Glycyl lysine isopeptide (Lys-Gly) (interchain with G-Cter in SUMO2)" evidence="3">
    <location>
        <position position="177"/>
    </location>
</feature>
<feature type="cross-link" description="Glycyl lysine isopeptide (Lys-Gly) (interchain with G-Cter in SUMO2)" evidence="3">
    <location>
        <position position="248"/>
    </location>
</feature>
<feature type="cross-link" description="Glycyl lysine isopeptide (Lys-Gly) (interchain with G-Cter in SUMO2)" evidence="3">
    <location>
        <position position="262"/>
    </location>
</feature>
<feature type="cross-link" description="Glycyl lysine isopeptide (Lys-Gly) (interchain with G-Cter in SUMO2)" evidence="3">
    <location>
        <position position="270"/>
    </location>
</feature>
<feature type="mutagenesis site" description="Abrogates GTP-binding and nucleolar localization." evidence="8">
    <original>G</original>
    <variation>V</variation>
    <location>
        <position position="256"/>
    </location>
</feature>
<feature type="mutagenesis site" description="Abrogates nucleolar localization." evidence="8">
    <original>G</original>
    <variation>V</variation>
    <location>
        <position position="261"/>
    </location>
</feature>
<name>GNL3_RAT</name>
<organism>
    <name type="scientific">Rattus norvegicus</name>
    <name type="common">Rat</name>
    <dbReference type="NCBI Taxonomy" id="10116"/>
    <lineage>
        <taxon>Eukaryota</taxon>
        <taxon>Metazoa</taxon>
        <taxon>Chordata</taxon>
        <taxon>Craniata</taxon>
        <taxon>Vertebrata</taxon>
        <taxon>Euteleostomi</taxon>
        <taxon>Mammalia</taxon>
        <taxon>Eutheria</taxon>
        <taxon>Euarchontoglires</taxon>
        <taxon>Glires</taxon>
        <taxon>Rodentia</taxon>
        <taxon>Myomorpha</taxon>
        <taxon>Muroidea</taxon>
        <taxon>Muridae</taxon>
        <taxon>Murinae</taxon>
        <taxon>Rattus</taxon>
    </lineage>
</organism>
<dbReference type="EMBL" id="AY181024">
    <property type="protein sequence ID" value="AAO19471.1"/>
    <property type="molecule type" value="mRNA"/>
</dbReference>
<dbReference type="EMBL" id="BC093602">
    <property type="protein sequence ID" value="AAH93602.1"/>
    <property type="molecule type" value="mRNA"/>
</dbReference>
<dbReference type="RefSeq" id="NP_783170.1">
    <property type="nucleotide sequence ID" value="NM_175580.3"/>
</dbReference>
<dbReference type="SMR" id="Q811S9"/>
<dbReference type="FunCoup" id="Q811S9">
    <property type="interactions" value="1839"/>
</dbReference>
<dbReference type="STRING" id="10116.ENSRNOP00000035860"/>
<dbReference type="iPTMnet" id="Q811S9"/>
<dbReference type="PhosphoSitePlus" id="Q811S9"/>
<dbReference type="jPOST" id="Q811S9"/>
<dbReference type="PaxDb" id="10116-ENSRNOP00000035860"/>
<dbReference type="Ensembl" id="ENSRNOT00000033677.6">
    <property type="protein sequence ID" value="ENSRNOP00000035860.3"/>
    <property type="gene ID" value="ENSRNOG00000028461.6"/>
</dbReference>
<dbReference type="GeneID" id="290556"/>
<dbReference type="KEGG" id="rno:290556"/>
<dbReference type="UCSC" id="RGD:631354">
    <property type="organism name" value="rat"/>
</dbReference>
<dbReference type="AGR" id="RGD:631354"/>
<dbReference type="CTD" id="26354"/>
<dbReference type="RGD" id="631354">
    <property type="gene designation" value="Gnl3"/>
</dbReference>
<dbReference type="eggNOG" id="KOG2484">
    <property type="taxonomic scope" value="Eukaryota"/>
</dbReference>
<dbReference type="GeneTree" id="ENSGT00940000158320"/>
<dbReference type="HOGENOM" id="CLU_011106_5_3_1"/>
<dbReference type="InParanoid" id="Q811S9"/>
<dbReference type="OMA" id="FKLDGLW"/>
<dbReference type="OrthoDB" id="444945at2759"/>
<dbReference type="PhylomeDB" id="Q811S9"/>
<dbReference type="TreeFam" id="TF313085"/>
<dbReference type="Reactome" id="R-RNO-6791226">
    <property type="pathway name" value="Major pathway of rRNA processing in the nucleolus and cytosol"/>
</dbReference>
<dbReference type="PRO" id="PR:Q811S9"/>
<dbReference type="Proteomes" id="UP000002494">
    <property type="component" value="Chromosome 16"/>
</dbReference>
<dbReference type="Bgee" id="ENSRNOG00000028461">
    <property type="expression patterns" value="Expressed in pancreas and 19 other cell types or tissues"/>
</dbReference>
<dbReference type="GO" id="GO:0005694">
    <property type="term" value="C:chromosome"/>
    <property type="evidence" value="ECO:0007669"/>
    <property type="project" value="Ensembl"/>
</dbReference>
<dbReference type="GO" id="GO:0030496">
    <property type="term" value="C:midbody"/>
    <property type="evidence" value="ECO:0007669"/>
    <property type="project" value="Ensembl"/>
</dbReference>
<dbReference type="GO" id="GO:0016604">
    <property type="term" value="C:nuclear body"/>
    <property type="evidence" value="ECO:0007669"/>
    <property type="project" value="Ensembl"/>
</dbReference>
<dbReference type="GO" id="GO:0005730">
    <property type="term" value="C:nucleolus"/>
    <property type="evidence" value="ECO:0000314"/>
    <property type="project" value="UniProtKB"/>
</dbReference>
<dbReference type="GO" id="GO:0005654">
    <property type="term" value="C:nucleoplasm"/>
    <property type="evidence" value="ECO:0000266"/>
    <property type="project" value="RGD"/>
</dbReference>
<dbReference type="GO" id="GO:0005634">
    <property type="term" value="C:nucleus"/>
    <property type="evidence" value="ECO:0000314"/>
    <property type="project" value="UniProtKB"/>
</dbReference>
<dbReference type="GO" id="GO:0005525">
    <property type="term" value="F:GTP binding"/>
    <property type="evidence" value="ECO:0000315"/>
    <property type="project" value="UniProtKB"/>
</dbReference>
<dbReference type="GO" id="GO:0048027">
    <property type="term" value="F:mRNA 5'-UTR binding"/>
    <property type="evidence" value="ECO:0000266"/>
    <property type="project" value="RGD"/>
</dbReference>
<dbReference type="GO" id="GO:1902895">
    <property type="term" value="P:positive regulation of miRNA transcription"/>
    <property type="evidence" value="ECO:0000266"/>
    <property type="project" value="RGD"/>
</dbReference>
<dbReference type="GO" id="GO:1904816">
    <property type="term" value="P:positive regulation of protein localization to chromosome, telomeric region"/>
    <property type="evidence" value="ECO:0000266"/>
    <property type="project" value="RGD"/>
</dbReference>
<dbReference type="GO" id="GO:0033235">
    <property type="term" value="P:positive regulation of protein sumoylation"/>
    <property type="evidence" value="ECO:0000266"/>
    <property type="project" value="RGD"/>
</dbReference>
<dbReference type="GO" id="GO:0032206">
    <property type="term" value="P:positive regulation of telomere maintenance"/>
    <property type="evidence" value="ECO:0000266"/>
    <property type="project" value="RGD"/>
</dbReference>
<dbReference type="GO" id="GO:0042127">
    <property type="term" value="P:regulation of cell population proliferation"/>
    <property type="evidence" value="ECO:0000315"/>
    <property type="project" value="UniProtKB"/>
</dbReference>
<dbReference type="GO" id="GO:0017145">
    <property type="term" value="P:stem cell division"/>
    <property type="evidence" value="ECO:0000266"/>
    <property type="project" value="RGD"/>
</dbReference>
<dbReference type="GO" id="GO:0019827">
    <property type="term" value="P:stem cell population maintenance"/>
    <property type="evidence" value="ECO:0000266"/>
    <property type="project" value="RGD"/>
</dbReference>
<dbReference type="CDD" id="cd04178">
    <property type="entry name" value="Nucleostemin_like"/>
    <property type="match status" value="1"/>
</dbReference>
<dbReference type="FunFam" id="3.40.50.300:FF:001106">
    <property type="entry name" value="Guanine nucleotide-binding protein-like 3"/>
    <property type="match status" value="1"/>
</dbReference>
<dbReference type="Gene3D" id="1.10.1580.10">
    <property type="match status" value="1"/>
</dbReference>
<dbReference type="Gene3D" id="3.40.50.300">
    <property type="entry name" value="P-loop containing nucleotide triphosphate hydrolases"/>
    <property type="match status" value="1"/>
</dbReference>
<dbReference type="InterPro" id="IPR030378">
    <property type="entry name" value="G_CP_dom"/>
</dbReference>
<dbReference type="InterPro" id="IPR014813">
    <property type="entry name" value="Gnl3_N_dom"/>
</dbReference>
<dbReference type="InterPro" id="IPR006073">
    <property type="entry name" value="GTP-bd"/>
</dbReference>
<dbReference type="InterPro" id="IPR023179">
    <property type="entry name" value="GTP-bd_ortho_bundle_sf"/>
</dbReference>
<dbReference type="InterPro" id="IPR027417">
    <property type="entry name" value="P-loop_NTPase"/>
</dbReference>
<dbReference type="InterPro" id="IPR050755">
    <property type="entry name" value="TRAFAC_YlqF/YawG_RiboMat"/>
</dbReference>
<dbReference type="PANTHER" id="PTHR11089">
    <property type="entry name" value="GTP-BINDING PROTEIN-RELATED"/>
    <property type="match status" value="1"/>
</dbReference>
<dbReference type="PANTHER" id="PTHR11089:SF11">
    <property type="entry name" value="GUANINE NUCLEOTIDE-BINDING PROTEIN-LIKE 3"/>
    <property type="match status" value="1"/>
</dbReference>
<dbReference type="Pfam" id="PF08701">
    <property type="entry name" value="GN3L_Grn1"/>
    <property type="match status" value="1"/>
</dbReference>
<dbReference type="Pfam" id="PF01926">
    <property type="entry name" value="MMR_HSR1"/>
    <property type="match status" value="1"/>
</dbReference>
<dbReference type="SUPFAM" id="SSF52540">
    <property type="entry name" value="P-loop containing nucleoside triphosphate hydrolases"/>
    <property type="match status" value="1"/>
</dbReference>
<dbReference type="PROSITE" id="PS51721">
    <property type="entry name" value="G_CP"/>
    <property type="match status" value="1"/>
</dbReference>
<gene>
    <name type="primary">Gnl3</name>
    <name type="synonym">Ns</name>
</gene>
<reference key="1">
    <citation type="journal article" date="2002" name="Genes Dev.">
        <title>A nucleolar mechanism controlling cell proliferation in stem and cancer cells.</title>
        <authorList>
            <person name="Tsai R.Y.L."/>
            <person name="McKay R.D.G."/>
        </authorList>
    </citation>
    <scope>NUCLEOTIDE SEQUENCE [MRNA]</scope>
    <scope>FUNCTION</scope>
    <scope>INTERACTION WITH TP53</scope>
    <scope>SUBCELLULAR LOCATION</scope>
    <scope>TISSUE SPECIFICITY</scope>
    <source>
        <strain>Sprague-Dawley</strain>
    </source>
</reference>
<reference key="2">
    <citation type="journal article" date="2004" name="Genome Res.">
        <title>The status, quality, and expansion of the NIH full-length cDNA project: the Mammalian Gene Collection (MGC).</title>
        <authorList>
            <consortium name="The MGC Project Team"/>
        </authorList>
    </citation>
    <scope>NUCLEOTIDE SEQUENCE [LARGE SCALE MRNA]</scope>
    <source>
        <tissue>Brain</tissue>
    </source>
</reference>
<reference key="3">
    <citation type="journal article" date="2005" name="J. Cell Biol.">
        <title>A multistep, GTP-driven mechanism controlling the dynamic cycling of nucleostemin.</title>
        <authorList>
            <person name="Tsai R.Y.L."/>
            <person name="McKay R.D.G."/>
        </authorList>
    </citation>
    <scope>SUBCELLULAR LOCATION</scope>
    <scope>DOMAINS</scope>
    <scope>MUTAGENESIS OF GLY-256 AND GLY-261</scope>
</reference>
<reference key="4">
    <citation type="journal article" date="2012" name="Nat. Commun.">
        <title>Quantitative maps of protein phosphorylation sites across 14 different rat organs and tissues.</title>
        <authorList>
            <person name="Lundby A."/>
            <person name="Secher A."/>
            <person name="Lage K."/>
            <person name="Nordsborg N.B."/>
            <person name="Dmytriyev A."/>
            <person name="Lundby C."/>
            <person name="Olsen J.V."/>
        </authorList>
    </citation>
    <scope>PHOSPHORYLATION [LARGE SCALE ANALYSIS] AT SER-101 AND SER-505</scope>
    <scope>IDENTIFICATION BY MASS SPECTROMETRY [LARGE SCALE ANALYSIS]</scope>
</reference>
<sequence>MKRPKLKKASKRMTCHKRYKIQKKVREHHRKLRKEAKKRGHKKPKKDPGVPNSAPFKEALLREAELRKQQLEELKQQQKLDRQKEQERKRKLEISPDDEQSNVETQEESDEPKIKKAKSGKQNPKKLHCQELKKVIEASDIVLEVLDARDPLGCRCPQVEEAVIQSGCKKLVLVLNKSDLVPKENLENWLTYLNKELPTVVFKASTNLKNRKKTFKIKKKVVPFQSKLCCGKEALWKLLGGFQQSCGKGVQVGVVGFPNVGKSSIINSLKQERICSVGVSMGLTRSMQIVPLDKQITIIDSPCFIISPCNSPAALALRSPASIEVLRPLEAASAILSQADSQQVVLKYTVPGYKDSLDFFTKLAQRRGLHQKGGSPNVESAAKLLWSEWTGASLGYYCHPPASWNHSPHFNENITAIMKRGFNLEELEKNNAHSIQVLKGPHLTNKILFRSSGLTNGILEEKDIPEESPKQTEDQQDGDDQEHVTGEKNAEISDVTPVEETREMSPGQSTASKPSDRSFILDKMSEEDDAYDFTTDYI</sequence>
<accession>Q811S9</accession>
<accession>Q566E0</accession>
<comment type="function">
    <text evidence="1 7">May be required to maintain the proliferative capacity of stem cells. Stabilizes MDM2 by preventing its ubiquitination, and hence proteasomal degradation (By similarity).</text>
</comment>
<comment type="subunit">
    <text evidence="1">Interacts with MDM2; this interaction stabilizes MDM2. Interaction with MDM2 occurs in the nucleoplasm and is triggered by a nucleolar release mechanism, such as mitosis-induced nucleolar disassembly (By similarity). May interact with p53/TP53 via its basic domain. This interaction is most probably indirect and mediated by MDM2-binding (By similarity).</text>
</comment>
<comment type="subcellular location">
    <subcellularLocation>
        <location evidence="8">Nucleus</location>
    </subcellularLocation>
    <subcellularLocation>
        <location evidence="7 8">Nucleus</location>
        <location evidence="7 8">Nucleolus</location>
    </subcellularLocation>
    <text evidence="8">Shuttles between the nucleus and nucleolus (PubMed:15657390).</text>
</comment>
<comment type="tissue specificity">
    <text evidence="7">Expressed in testis.</text>
</comment>
<comment type="developmental stage">
    <text>Expressed by developing CNS stem cells. When cortical stem cells differentiate into neurons, astrocytes, and oligodendrocytes, expression level is reduced in both dividing and postmitotic progeny.</text>
</comment>
<comment type="domain">
    <text evidence="8">The basic domain (B) allows nucleolar localization in the absence of GTP. The intermediate domain (I) inhibits nucleolar localization by the B domain and is required for exit from the nucleolus. Exit from the nucleolus to the nucleoplasm requires both the I and the acidic (A) domains, and may be triggered by GTP hydrolysis.</text>
</comment>
<comment type="domain">
    <text evidence="8">In contrast to other GTP-binding proteins, this family is characterized by a circular permutation of the GTPase motifs described by a G4-G1-G3 pattern.</text>
</comment>
<comment type="similarity">
    <text evidence="5">Belongs to the TRAFAC class YlqF/YawG GTPase family.</text>
</comment>
<evidence type="ECO:0000250" key="1"/>
<evidence type="ECO:0000250" key="2">
    <source>
        <dbReference type="UniProtKB" id="Q8CI11"/>
    </source>
</evidence>
<evidence type="ECO:0000250" key="3">
    <source>
        <dbReference type="UniProtKB" id="Q9BVP2"/>
    </source>
</evidence>
<evidence type="ECO:0000255" key="4"/>
<evidence type="ECO:0000255" key="5">
    <source>
        <dbReference type="PROSITE-ProRule" id="PRU01058"/>
    </source>
</evidence>
<evidence type="ECO:0000256" key="6">
    <source>
        <dbReference type="SAM" id="MobiDB-lite"/>
    </source>
</evidence>
<evidence type="ECO:0000269" key="7">
    <source>
    </source>
</evidence>
<evidence type="ECO:0000269" key="8">
    <source>
    </source>
</evidence>
<evidence type="ECO:0000305" key="9"/>
<evidence type="ECO:0007744" key="10">
    <source>
    </source>
</evidence>
<keyword id="KW-0007">Acetylation</keyword>
<keyword id="KW-0175">Coiled coil</keyword>
<keyword id="KW-0342">GTP-binding</keyword>
<keyword id="KW-1017">Isopeptide bond</keyword>
<keyword id="KW-0547">Nucleotide-binding</keyword>
<keyword id="KW-0539">Nucleus</keyword>
<keyword id="KW-0597">Phosphoprotein</keyword>
<keyword id="KW-1185">Reference proteome</keyword>
<keyword id="KW-0832">Ubl conjugation</keyword>